<protein>
    <recommendedName>
        <fullName>Phenylalanine N-monooxygenase</fullName>
        <ecNumber evidence="3">1.14.14.40</ecNumber>
    </recommendedName>
    <alternativeName>
        <fullName>Cytochrome P450 79A2</fullName>
    </alternativeName>
    <alternativeName>
        <fullName>Phenylalanine N-hydroxylase</fullName>
    </alternativeName>
</protein>
<name>C79A2_ARATH</name>
<sequence>MLDSTPMLAFIIGLLLLALTMKRKEKKKTMLISPTRNLSLPPGPKSWPLIGNLPEILGRNKPVFRWIHSLMKELNTDIACIRLANTHVIPVTSPRIAREILKKQDSVFATRPLTMGTEYCSRGYLTVAVEPQGEQWKKMRRVVASHVTSKKSFQMMLQKRTEEADNLVRYINNRSVKNRGNAFVVIDLRLAVRQYSGNVARKMMFGIRHFGKGSEDGSGPGLEEIEHVESLFTVLTHLYAFALSDYVPWLRFLDLEGHEKVVSNAMRNVSKYNDPFVDERLMQWRNGKMKEPQDFLDMFIIAKDTDGKPTLSDEEIKAQVTELMLATVDNPSNAAEWGMAEMINEPSIMQKAVEEIDRVVGKDRLVIESDLPNLNYVKACVKEAFRLHPVAPFNLPHMSTTDTVVDGYFIPKGSHVLISRMGIGRNPSVWDKPHKFDPERHLSTNTCVDLNESDLNIISFSAGRRGCMGVDIGSAMTYMLLARLIQGFTWLPVPGKNKIDISESKNDLFMAKPLYAVATPRLAPHVYPT</sequence>
<proteinExistence type="evidence at protein level"/>
<dbReference type="EC" id="1.14.14.40" evidence="3"/>
<dbReference type="EMBL" id="AF245302">
    <property type="protein sequence ID" value="AAF70255.1"/>
    <property type="status" value="ALT_INIT"/>
    <property type="molecule type" value="mRNA"/>
</dbReference>
<dbReference type="EMBL" id="AB010692">
    <property type="protein sequence ID" value="BAB09969.1"/>
    <property type="molecule type" value="Genomic_DNA"/>
</dbReference>
<dbReference type="EMBL" id="CP002688">
    <property type="protein sequence ID" value="ANM70027.1"/>
    <property type="molecule type" value="Genomic_DNA"/>
</dbReference>
<dbReference type="RefSeq" id="NP_568153.2">
    <property type="nucleotide sequence ID" value="NM_120608.2"/>
</dbReference>
<dbReference type="SMR" id="Q9FLC8"/>
<dbReference type="FunCoup" id="Q9FLC8">
    <property type="interactions" value="338"/>
</dbReference>
<dbReference type="STRING" id="3702.Q9FLC8"/>
<dbReference type="PaxDb" id="3702-AT5G05260.1"/>
<dbReference type="EnsemblPlants" id="AT5G05260.2">
    <property type="protein sequence ID" value="AT5G05260.2"/>
    <property type="gene ID" value="AT5G05260"/>
</dbReference>
<dbReference type="GeneID" id="830408"/>
<dbReference type="Gramene" id="AT5G05260.2">
    <property type="protein sequence ID" value="AT5G05260.2"/>
    <property type="gene ID" value="AT5G05260"/>
</dbReference>
<dbReference type="KEGG" id="ath:AT5G05260"/>
<dbReference type="Araport" id="AT5G05260"/>
<dbReference type="TAIR" id="AT5G05260">
    <property type="gene designation" value="CYP79A2"/>
</dbReference>
<dbReference type="eggNOG" id="KOG0156">
    <property type="taxonomic scope" value="Eukaryota"/>
</dbReference>
<dbReference type="HOGENOM" id="CLU_001570_4_0_1"/>
<dbReference type="InParanoid" id="Q9FLC8"/>
<dbReference type="OMA" id="HAMAKPR"/>
<dbReference type="OrthoDB" id="2789670at2759"/>
<dbReference type="PhylomeDB" id="Q9FLC8"/>
<dbReference type="BioCyc" id="ARA:AT5G05260-MONOMER"/>
<dbReference type="BioCyc" id="MetaCyc:AT5G05260-MONOMER"/>
<dbReference type="BRENDA" id="1.14.14.40">
    <property type="organism ID" value="399"/>
</dbReference>
<dbReference type="SABIO-RK" id="Q9FLC8"/>
<dbReference type="UniPathway" id="UPA00742"/>
<dbReference type="PRO" id="PR:Q9FLC8"/>
<dbReference type="Proteomes" id="UP000006548">
    <property type="component" value="Chromosome 5"/>
</dbReference>
<dbReference type="ExpressionAtlas" id="Q9FLC8">
    <property type="expression patterns" value="baseline and differential"/>
</dbReference>
<dbReference type="GO" id="GO:0005789">
    <property type="term" value="C:endoplasmic reticulum membrane"/>
    <property type="evidence" value="ECO:0007669"/>
    <property type="project" value="UniProtKB-SubCell"/>
</dbReference>
<dbReference type="GO" id="GO:0020037">
    <property type="term" value="F:heme binding"/>
    <property type="evidence" value="ECO:0007669"/>
    <property type="project" value="InterPro"/>
</dbReference>
<dbReference type="GO" id="GO:0005506">
    <property type="term" value="F:iron ion binding"/>
    <property type="evidence" value="ECO:0007669"/>
    <property type="project" value="InterPro"/>
</dbReference>
<dbReference type="GO" id="GO:0102684">
    <property type="term" value="F:L-phenylalanine N-monooxygenase activity"/>
    <property type="evidence" value="ECO:0007669"/>
    <property type="project" value="UniProtKB-EC"/>
</dbReference>
<dbReference type="GO" id="GO:0044550">
    <property type="term" value="P:secondary metabolite biosynthetic process"/>
    <property type="evidence" value="ECO:0007669"/>
    <property type="project" value="UniProtKB-ARBA"/>
</dbReference>
<dbReference type="CDD" id="cd20658">
    <property type="entry name" value="CYP79"/>
    <property type="match status" value="1"/>
</dbReference>
<dbReference type="FunFam" id="1.10.630.10:FF:000037">
    <property type="entry name" value="Cytochrome P450 9"/>
    <property type="match status" value="1"/>
</dbReference>
<dbReference type="Gene3D" id="1.10.630.10">
    <property type="entry name" value="Cytochrome P450"/>
    <property type="match status" value="1"/>
</dbReference>
<dbReference type="InterPro" id="IPR001128">
    <property type="entry name" value="Cyt_P450"/>
</dbReference>
<dbReference type="InterPro" id="IPR017972">
    <property type="entry name" value="Cyt_P450_CS"/>
</dbReference>
<dbReference type="InterPro" id="IPR002401">
    <property type="entry name" value="Cyt_P450_E_grp-I"/>
</dbReference>
<dbReference type="InterPro" id="IPR036396">
    <property type="entry name" value="Cyt_P450_sf"/>
</dbReference>
<dbReference type="PANTHER" id="PTHR47944">
    <property type="entry name" value="CYTOCHROME P450 98A9"/>
    <property type="match status" value="1"/>
</dbReference>
<dbReference type="PANTHER" id="PTHR47944:SF4">
    <property type="entry name" value="OS09G0441700 PROTEIN"/>
    <property type="match status" value="1"/>
</dbReference>
<dbReference type="Pfam" id="PF00067">
    <property type="entry name" value="p450"/>
    <property type="match status" value="1"/>
</dbReference>
<dbReference type="PRINTS" id="PR00463">
    <property type="entry name" value="EP450I"/>
</dbReference>
<dbReference type="SUPFAM" id="SSF48264">
    <property type="entry name" value="Cytochrome P450"/>
    <property type="match status" value="1"/>
</dbReference>
<dbReference type="PROSITE" id="PS00086">
    <property type="entry name" value="CYTOCHROME_P450"/>
    <property type="match status" value="1"/>
</dbReference>
<reference key="1">
    <citation type="journal article" date="2000" name="J. Biol. Chem.">
        <title>Cytochrome P450 CYP79A2 from Arabidopsis thaliana L. catalyzes the conversion of L-phenylalanine to phenylacetaldoxime in the biosynthesis of benzylglucosinolate.</title>
        <authorList>
            <person name="Wittstock U."/>
            <person name="Halkier B.A."/>
        </authorList>
    </citation>
    <scope>NUCLEOTIDE SEQUENCE [MRNA]</scope>
    <scope>FUNCTION</scope>
    <scope>CATALYTIC ACTIVITY</scope>
    <scope>BIOPHYSICOCHEMICAL PROPERTIES</scope>
    <source>
        <strain>cv. Wassilewskija</strain>
        <tissue>Silique</tissue>
    </source>
</reference>
<reference key="2">
    <citation type="journal article" date="1998" name="DNA Res.">
        <title>Structural analysis of Arabidopsis thaliana chromosome 5. V. Sequence features of the regions of 1,381,565 bp covered by twenty one physically assigned P1 and TAC clones.</title>
        <authorList>
            <person name="Kaneko T."/>
            <person name="Kotani H."/>
            <person name="Nakamura Y."/>
            <person name="Sato S."/>
            <person name="Asamizu E."/>
            <person name="Miyajima N."/>
            <person name="Tabata S."/>
        </authorList>
    </citation>
    <scope>NUCLEOTIDE SEQUENCE [LARGE SCALE GENOMIC DNA]</scope>
    <source>
        <strain>cv. Columbia</strain>
    </source>
</reference>
<reference key="3">
    <citation type="journal article" date="2017" name="Plant J.">
        <title>Araport11: a complete reannotation of the Arabidopsis thaliana reference genome.</title>
        <authorList>
            <person name="Cheng C.Y."/>
            <person name="Krishnakumar V."/>
            <person name="Chan A.P."/>
            <person name="Thibaud-Nissen F."/>
            <person name="Schobel S."/>
            <person name="Town C.D."/>
        </authorList>
    </citation>
    <scope>GENOME REANNOTATION</scope>
    <source>
        <strain>cv. Columbia</strain>
    </source>
</reference>
<accession>Q9FLC8</accession>
<accession>F4JZ93</accession>
<accession>Q9M4Y7</accession>
<organism>
    <name type="scientific">Arabidopsis thaliana</name>
    <name type="common">Mouse-ear cress</name>
    <dbReference type="NCBI Taxonomy" id="3702"/>
    <lineage>
        <taxon>Eukaryota</taxon>
        <taxon>Viridiplantae</taxon>
        <taxon>Streptophyta</taxon>
        <taxon>Embryophyta</taxon>
        <taxon>Tracheophyta</taxon>
        <taxon>Spermatophyta</taxon>
        <taxon>Magnoliopsida</taxon>
        <taxon>eudicotyledons</taxon>
        <taxon>Gunneridae</taxon>
        <taxon>Pentapetalae</taxon>
        <taxon>rosids</taxon>
        <taxon>malvids</taxon>
        <taxon>Brassicales</taxon>
        <taxon>Brassicaceae</taxon>
        <taxon>Camelineae</taxon>
        <taxon>Arabidopsis</taxon>
    </lineage>
</organism>
<keyword id="KW-0256">Endoplasmic reticulum</keyword>
<keyword id="KW-0349">Heme</keyword>
<keyword id="KW-0408">Iron</keyword>
<keyword id="KW-0472">Membrane</keyword>
<keyword id="KW-0479">Metal-binding</keyword>
<keyword id="KW-0503">Monooxygenase</keyword>
<keyword id="KW-0560">Oxidoreductase</keyword>
<keyword id="KW-1185">Reference proteome</keyword>
<keyword id="KW-0812">Transmembrane</keyword>
<keyword id="KW-1133">Transmembrane helix</keyword>
<comment type="function">
    <text evidence="3">Converts L-phenylalanine into phenylacetaldoxime, the precursor of benzylglucosinolate (glucotropeolin).</text>
</comment>
<comment type="catalytic activity">
    <reaction evidence="3">
        <text>L-phenylalanine + 2 reduced [NADPH--hemoprotein reductase] + 2 O2 = (E)-phenylacetaldehyde oxime + 2 oxidized [NADPH--hemoprotein reductase] + CO2 + 3 H2O + 2 H(+)</text>
        <dbReference type="Rhea" id="RHEA:33263"/>
        <dbReference type="Rhea" id="RHEA-COMP:11964"/>
        <dbReference type="Rhea" id="RHEA-COMP:11965"/>
        <dbReference type="ChEBI" id="CHEBI:15377"/>
        <dbReference type="ChEBI" id="CHEBI:15378"/>
        <dbReference type="ChEBI" id="CHEBI:15379"/>
        <dbReference type="ChEBI" id="CHEBI:16526"/>
        <dbReference type="ChEBI" id="CHEBI:47793"/>
        <dbReference type="ChEBI" id="CHEBI:57618"/>
        <dbReference type="ChEBI" id="CHEBI:58095"/>
        <dbReference type="ChEBI" id="CHEBI:58210"/>
        <dbReference type="EC" id="1.14.14.40"/>
    </reaction>
</comment>
<comment type="cofactor">
    <cofactor evidence="1">
        <name>heme</name>
        <dbReference type="ChEBI" id="CHEBI:30413"/>
    </cofactor>
</comment>
<comment type="biophysicochemical properties">
    <kinetics>
        <KM evidence="3">6.7 uM for phenylalanine</KM>
        <Vmax evidence="3">16.6 pmol/min/mg enzyme</Vmax>
    </kinetics>
</comment>
<comment type="pathway">
    <text>Secondary metabolite biosynthesis; phenylglucosinolate biosynthesis.</text>
</comment>
<comment type="subcellular location">
    <subcellularLocation>
        <location evidence="4">Endoplasmic reticulum membrane</location>
        <topology evidence="4">Single-pass membrane protein</topology>
    </subcellularLocation>
</comment>
<comment type="similarity">
    <text evidence="4">Belongs to the cytochrome P450 family.</text>
</comment>
<comment type="sequence caution" evidence="4">
    <conflict type="erroneous initiation">
        <sequence resource="EMBL-CDS" id="AAF70255"/>
    </conflict>
    <text>Truncated N-terminus.</text>
</comment>
<gene>
    <name type="primary">CYP79A2</name>
    <name type="ordered locus">At5g05260</name>
    <name type="ORF">K18I23.6</name>
</gene>
<feature type="chain" id="PRO_0000052153" description="Phenylalanine N-monooxygenase">
    <location>
        <begin position="1"/>
        <end position="529"/>
    </location>
</feature>
<feature type="transmembrane region" description="Helical" evidence="2">
    <location>
        <begin position="1"/>
        <end position="21"/>
    </location>
</feature>
<feature type="binding site" description="axial binding residue" evidence="1">
    <location>
        <position position="467"/>
    </location>
    <ligand>
        <name>heme</name>
        <dbReference type="ChEBI" id="CHEBI:30413"/>
    </ligand>
    <ligandPart>
        <name>Fe</name>
        <dbReference type="ChEBI" id="CHEBI:18248"/>
    </ligandPart>
</feature>
<evidence type="ECO:0000250" key="1"/>
<evidence type="ECO:0000255" key="2"/>
<evidence type="ECO:0000269" key="3">
    <source>
    </source>
</evidence>
<evidence type="ECO:0000305" key="4"/>